<reference key="1">
    <citation type="submission" date="2008-12" db="EMBL/GenBank/DDBJ databases">
        <title>Complete sequence of Chloroflexus aggregans DSM 9485.</title>
        <authorList>
            <consortium name="US DOE Joint Genome Institute"/>
            <person name="Lucas S."/>
            <person name="Copeland A."/>
            <person name="Lapidus A."/>
            <person name="Glavina del Rio T."/>
            <person name="Dalin E."/>
            <person name="Tice H."/>
            <person name="Pitluck S."/>
            <person name="Foster B."/>
            <person name="Larimer F."/>
            <person name="Land M."/>
            <person name="Hauser L."/>
            <person name="Kyrpides N."/>
            <person name="Mikhailova N."/>
            <person name="Bryant D.A."/>
            <person name="Richardson P."/>
        </authorList>
    </citation>
    <scope>NUCLEOTIDE SEQUENCE [LARGE SCALE GENOMIC DNA]</scope>
    <source>
        <strain>MD-66 / DSM 9485</strain>
    </source>
</reference>
<dbReference type="EMBL" id="CP001337">
    <property type="protein sequence ID" value="ACL25463.1"/>
    <property type="molecule type" value="Genomic_DNA"/>
</dbReference>
<dbReference type="RefSeq" id="WP_015941321.1">
    <property type="nucleotide sequence ID" value="NC_011831.1"/>
</dbReference>
<dbReference type="SMR" id="B8G4I7"/>
<dbReference type="STRING" id="326427.Cagg_2594"/>
<dbReference type="KEGG" id="cag:Cagg_2594"/>
<dbReference type="eggNOG" id="COG0217">
    <property type="taxonomic scope" value="Bacteria"/>
</dbReference>
<dbReference type="HOGENOM" id="CLU_062974_2_2_0"/>
<dbReference type="OrthoDB" id="9781053at2"/>
<dbReference type="Proteomes" id="UP000002508">
    <property type="component" value="Chromosome"/>
</dbReference>
<dbReference type="GO" id="GO:0005829">
    <property type="term" value="C:cytosol"/>
    <property type="evidence" value="ECO:0007669"/>
    <property type="project" value="TreeGrafter"/>
</dbReference>
<dbReference type="GO" id="GO:0003677">
    <property type="term" value="F:DNA binding"/>
    <property type="evidence" value="ECO:0007669"/>
    <property type="project" value="UniProtKB-UniRule"/>
</dbReference>
<dbReference type="GO" id="GO:0006355">
    <property type="term" value="P:regulation of DNA-templated transcription"/>
    <property type="evidence" value="ECO:0007669"/>
    <property type="project" value="UniProtKB-UniRule"/>
</dbReference>
<dbReference type="FunFam" id="1.10.10.200:FF:000002">
    <property type="entry name" value="Probable transcriptional regulatory protein CLM62_37755"/>
    <property type="match status" value="1"/>
</dbReference>
<dbReference type="Gene3D" id="1.10.10.200">
    <property type="match status" value="1"/>
</dbReference>
<dbReference type="Gene3D" id="3.30.70.980">
    <property type="match status" value="2"/>
</dbReference>
<dbReference type="HAMAP" id="MF_00693">
    <property type="entry name" value="Transcrip_reg_TACO1"/>
    <property type="match status" value="1"/>
</dbReference>
<dbReference type="InterPro" id="IPR017856">
    <property type="entry name" value="Integrase-like_N"/>
</dbReference>
<dbReference type="InterPro" id="IPR048300">
    <property type="entry name" value="TACO1_YebC-like_2nd/3rd_dom"/>
</dbReference>
<dbReference type="InterPro" id="IPR049083">
    <property type="entry name" value="TACO1_YebC_N"/>
</dbReference>
<dbReference type="InterPro" id="IPR002876">
    <property type="entry name" value="Transcrip_reg_TACO1-like"/>
</dbReference>
<dbReference type="InterPro" id="IPR026564">
    <property type="entry name" value="Transcrip_reg_TACO1-like_dom3"/>
</dbReference>
<dbReference type="InterPro" id="IPR029072">
    <property type="entry name" value="YebC-like"/>
</dbReference>
<dbReference type="NCBIfam" id="NF001030">
    <property type="entry name" value="PRK00110.1"/>
    <property type="match status" value="1"/>
</dbReference>
<dbReference type="NCBIfam" id="NF009044">
    <property type="entry name" value="PRK12378.1"/>
    <property type="match status" value="1"/>
</dbReference>
<dbReference type="NCBIfam" id="TIGR01033">
    <property type="entry name" value="YebC/PmpR family DNA-binding transcriptional regulator"/>
    <property type="match status" value="1"/>
</dbReference>
<dbReference type="PANTHER" id="PTHR12532:SF6">
    <property type="entry name" value="TRANSCRIPTIONAL REGULATORY PROTEIN YEBC-RELATED"/>
    <property type="match status" value="1"/>
</dbReference>
<dbReference type="PANTHER" id="PTHR12532">
    <property type="entry name" value="TRANSLATIONAL ACTIVATOR OF CYTOCHROME C OXIDASE 1"/>
    <property type="match status" value="1"/>
</dbReference>
<dbReference type="Pfam" id="PF20772">
    <property type="entry name" value="TACO1_YebC_N"/>
    <property type="match status" value="1"/>
</dbReference>
<dbReference type="Pfam" id="PF01709">
    <property type="entry name" value="Transcrip_reg"/>
    <property type="match status" value="1"/>
</dbReference>
<dbReference type="SUPFAM" id="SSF75625">
    <property type="entry name" value="YebC-like"/>
    <property type="match status" value="1"/>
</dbReference>
<keyword id="KW-0963">Cytoplasm</keyword>
<keyword id="KW-0238">DNA-binding</keyword>
<keyword id="KW-0804">Transcription</keyword>
<keyword id="KW-0805">Transcription regulation</keyword>
<evidence type="ECO:0000255" key="1">
    <source>
        <dbReference type="HAMAP-Rule" id="MF_00693"/>
    </source>
</evidence>
<evidence type="ECO:0000256" key="2">
    <source>
        <dbReference type="SAM" id="MobiDB-lite"/>
    </source>
</evidence>
<proteinExistence type="inferred from homology"/>
<feature type="chain" id="PRO_1000200086" description="Probable transcriptional regulatory protein Cagg_2594">
    <location>
        <begin position="1"/>
        <end position="252"/>
    </location>
</feature>
<feature type="region of interest" description="Disordered" evidence="2">
    <location>
        <begin position="1"/>
        <end position="22"/>
    </location>
</feature>
<feature type="compositionally biased region" description="Basic residues" evidence="2">
    <location>
        <begin position="1"/>
        <end position="14"/>
    </location>
</feature>
<comment type="subcellular location">
    <subcellularLocation>
        <location evidence="1">Cytoplasm</location>
    </subcellularLocation>
</comment>
<comment type="similarity">
    <text evidence="1">Belongs to the TACO1 family.</text>
</comment>
<sequence length="252" mass="27956">MSGHSKWHTIRRAKSANDQRRGQLFTKLARDITIATREGGSGDPELNFRLRLAIEKARANNMPNENIQRAIERGLGKSNEAAIEEIFYEGYGPGGVAILIEAATDNRNRTSSDVRATFNKNGGSPGEPGSVSWMFEQKGLITVDLSATKRDPDELQLLAIDAGADDVIVDDETLEIYCEWTQLNAVRQALLDQGVPISNAEKIMRAKTLIQPDEKDALAALRLIEKLEDLDDVQKVYSNLDITTELVERFDS</sequence>
<organism>
    <name type="scientific">Chloroflexus aggregans (strain MD-66 / DSM 9485)</name>
    <dbReference type="NCBI Taxonomy" id="326427"/>
    <lineage>
        <taxon>Bacteria</taxon>
        <taxon>Bacillati</taxon>
        <taxon>Chloroflexota</taxon>
        <taxon>Chloroflexia</taxon>
        <taxon>Chloroflexales</taxon>
        <taxon>Chloroflexineae</taxon>
        <taxon>Chloroflexaceae</taxon>
        <taxon>Chloroflexus</taxon>
    </lineage>
</organism>
<accession>B8G4I7</accession>
<protein>
    <recommendedName>
        <fullName evidence="1">Probable transcriptional regulatory protein Cagg_2594</fullName>
    </recommendedName>
</protein>
<gene>
    <name type="ordered locus">Cagg_2594</name>
</gene>
<name>Y2594_CHLAD</name>